<keyword id="KW-0028">Amino-acid biosynthesis</keyword>
<keyword id="KW-0057">Aromatic amino acid biosynthesis</keyword>
<keyword id="KW-0963">Cytoplasm</keyword>
<keyword id="KW-1185">Reference proteome</keyword>
<keyword id="KW-0808">Transferase</keyword>
<feature type="chain" id="PRO_1000012412" description="3-phosphoshikimate 1-carboxyvinyltransferase">
    <location>
        <begin position="1"/>
        <end position="439"/>
    </location>
</feature>
<feature type="active site" description="Proton acceptor" evidence="1">
    <location>
        <position position="324"/>
    </location>
</feature>
<feature type="binding site" evidence="1">
    <location>
        <position position="25"/>
    </location>
    <ligand>
        <name>3-phosphoshikimate</name>
        <dbReference type="ChEBI" id="CHEBI:145989"/>
    </ligand>
</feature>
<feature type="binding site" evidence="1">
    <location>
        <position position="25"/>
    </location>
    <ligand>
        <name>phosphoenolpyruvate</name>
        <dbReference type="ChEBI" id="CHEBI:58702"/>
    </ligand>
</feature>
<feature type="binding site" evidence="1">
    <location>
        <position position="26"/>
    </location>
    <ligand>
        <name>3-phosphoshikimate</name>
        <dbReference type="ChEBI" id="CHEBI:145989"/>
    </ligand>
</feature>
<feature type="binding site" evidence="1">
    <location>
        <position position="30"/>
    </location>
    <ligand>
        <name>3-phosphoshikimate</name>
        <dbReference type="ChEBI" id="CHEBI:145989"/>
    </ligand>
</feature>
<feature type="binding site" evidence="1">
    <location>
        <position position="96"/>
    </location>
    <ligand>
        <name>phosphoenolpyruvate</name>
        <dbReference type="ChEBI" id="CHEBI:58702"/>
    </ligand>
</feature>
<feature type="binding site" evidence="1">
    <location>
        <position position="124"/>
    </location>
    <ligand>
        <name>phosphoenolpyruvate</name>
        <dbReference type="ChEBI" id="CHEBI:58702"/>
    </ligand>
</feature>
<feature type="binding site" evidence="1">
    <location>
        <position position="170"/>
    </location>
    <ligand>
        <name>3-phosphoshikimate</name>
        <dbReference type="ChEBI" id="CHEBI:145989"/>
    </ligand>
</feature>
<feature type="binding site" evidence="1">
    <location>
        <position position="171"/>
    </location>
    <ligand>
        <name>3-phosphoshikimate</name>
        <dbReference type="ChEBI" id="CHEBI:145989"/>
    </ligand>
</feature>
<feature type="binding site" evidence="1">
    <location>
        <position position="172"/>
    </location>
    <ligand>
        <name>3-phosphoshikimate</name>
        <dbReference type="ChEBI" id="CHEBI:145989"/>
    </ligand>
</feature>
<feature type="binding site" evidence="1">
    <location>
        <position position="172"/>
    </location>
    <ligand>
        <name>phosphoenolpyruvate</name>
        <dbReference type="ChEBI" id="CHEBI:58702"/>
    </ligand>
</feature>
<feature type="binding site" evidence="1">
    <location>
        <position position="202"/>
    </location>
    <ligand>
        <name>3-phosphoshikimate</name>
        <dbReference type="ChEBI" id="CHEBI:145989"/>
    </ligand>
</feature>
<feature type="binding site" evidence="1">
    <location>
        <position position="324"/>
    </location>
    <ligand>
        <name>3-phosphoshikimate</name>
        <dbReference type="ChEBI" id="CHEBI:145989"/>
    </ligand>
</feature>
<feature type="binding site" evidence="1">
    <location>
        <position position="351"/>
    </location>
    <ligand>
        <name>3-phosphoshikimate</name>
        <dbReference type="ChEBI" id="CHEBI:145989"/>
    </ligand>
</feature>
<feature type="binding site" evidence="1">
    <location>
        <position position="355"/>
    </location>
    <ligand>
        <name>phosphoenolpyruvate</name>
        <dbReference type="ChEBI" id="CHEBI:58702"/>
    </ligand>
</feature>
<feature type="binding site" evidence="1">
    <location>
        <position position="399"/>
    </location>
    <ligand>
        <name>phosphoenolpyruvate</name>
        <dbReference type="ChEBI" id="CHEBI:58702"/>
    </ligand>
</feature>
<feature type="binding site" evidence="1">
    <location>
        <position position="424"/>
    </location>
    <ligand>
        <name>phosphoenolpyruvate</name>
        <dbReference type="ChEBI" id="CHEBI:58702"/>
    </ligand>
</feature>
<sequence length="439" mass="46509">MNALAYLDLPHIRQARGLAALPGSKSISNRVLLIAALAEGRTEISGLLDSDDTRVMLAALRQLGVAVTDLGQGRVAVEGARRFPAEKAELFLGNAGTAFRPLTAALALMGGDYRLSGVPRMHERPIGDLVDALRAWGARIDYLGQAGYPPLHIGRGDIRADRVRVQGSVSSQFLTALLLAAPIEAGASGRPVTIEVIGELISKPYIEITLNLMARYGVNVVRDGWRAFTIEGDARYRSPGSIAVEGDASTASYLLALGVLGGGPVRVTGVGEQSIQGDTAFADTLAAMGANITKGSDWIEASGQAVAEGGRIKAFDADFNLIPDAAMTAATMALFADGPCRLRNIGSWRVKETDRIHAMHTELAKLGAKVESGPDWLSLTPPADSDWRDAHIGTWDDHRMAMCFSLAAFGPAAVRILDPGCVSKTFPDYFDVYAGLVSA</sequence>
<proteinExistence type="inferred from homology"/>
<organism>
    <name type="scientific">Bordetella avium (strain 197N)</name>
    <dbReference type="NCBI Taxonomy" id="360910"/>
    <lineage>
        <taxon>Bacteria</taxon>
        <taxon>Pseudomonadati</taxon>
        <taxon>Pseudomonadota</taxon>
        <taxon>Betaproteobacteria</taxon>
        <taxon>Burkholderiales</taxon>
        <taxon>Alcaligenaceae</taxon>
        <taxon>Bordetella</taxon>
    </lineage>
</organism>
<protein>
    <recommendedName>
        <fullName evidence="1">3-phosphoshikimate 1-carboxyvinyltransferase</fullName>
        <ecNumber evidence="1">2.5.1.19</ecNumber>
    </recommendedName>
    <alternativeName>
        <fullName evidence="1">5-enolpyruvylshikimate-3-phosphate synthase</fullName>
        <shortName evidence="1">EPSP synthase</shortName>
        <shortName evidence="1">EPSPS</shortName>
    </alternativeName>
</protein>
<name>AROA_BORA1</name>
<reference key="1">
    <citation type="journal article" date="2006" name="J. Bacteriol.">
        <title>Comparison of the genome sequence of the poultry pathogen Bordetella avium with those of B. bronchiseptica, B. pertussis, and B. parapertussis reveals extensive diversity in surface structures associated with host interaction.</title>
        <authorList>
            <person name="Sebaihia M."/>
            <person name="Preston A."/>
            <person name="Maskell D.J."/>
            <person name="Kuzmiak H."/>
            <person name="Connell T.D."/>
            <person name="King N.D."/>
            <person name="Orndorff P.E."/>
            <person name="Miyamoto D.M."/>
            <person name="Thomson N.R."/>
            <person name="Harris D."/>
            <person name="Goble A."/>
            <person name="Lord A."/>
            <person name="Murphy L."/>
            <person name="Quail M.A."/>
            <person name="Rutter S."/>
            <person name="Squares R."/>
            <person name="Squares S."/>
            <person name="Woodward J."/>
            <person name="Parkhill J."/>
            <person name="Temple L.M."/>
        </authorList>
    </citation>
    <scope>NUCLEOTIDE SEQUENCE [LARGE SCALE GENOMIC DNA]</scope>
    <source>
        <strain>197N</strain>
    </source>
</reference>
<comment type="function">
    <text evidence="1">Catalyzes the transfer of the enolpyruvyl moiety of phosphoenolpyruvate (PEP) to the 5-hydroxyl of shikimate-3-phosphate (S3P) to produce enolpyruvyl shikimate-3-phosphate and inorganic phosphate.</text>
</comment>
<comment type="catalytic activity">
    <reaction evidence="1">
        <text>3-phosphoshikimate + phosphoenolpyruvate = 5-O-(1-carboxyvinyl)-3-phosphoshikimate + phosphate</text>
        <dbReference type="Rhea" id="RHEA:21256"/>
        <dbReference type="ChEBI" id="CHEBI:43474"/>
        <dbReference type="ChEBI" id="CHEBI:57701"/>
        <dbReference type="ChEBI" id="CHEBI:58702"/>
        <dbReference type="ChEBI" id="CHEBI:145989"/>
        <dbReference type="EC" id="2.5.1.19"/>
    </reaction>
    <physiologicalReaction direction="left-to-right" evidence="1">
        <dbReference type="Rhea" id="RHEA:21257"/>
    </physiologicalReaction>
</comment>
<comment type="pathway">
    <text evidence="1">Metabolic intermediate biosynthesis; chorismate biosynthesis; chorismate from D-erythrose 4-phosphate and phosphoenolpyruvate: step 6/7.</text>
</comment>
<comment type="subunit">
    <text evidence="1">Monomer.</text>
</comment>
<comment type="subcellular location">
    <subcellularLocation>
        <location evidence="1">Cytoplasm</location>
    </subcellularLocation>
</comment>
<comment type="similarity">
    <text evidence="1">Belongs to the EPSP synthase family.</text>
</comment>
<evidence type="ECO:0000255" key="1">
    <source>
        <dbReference type="HAMAP-Rule" id="MF_00210"/>
    </source>
</evidence>
<gene>
    <name evidence="1" type="primary">aroA</name>
    <name type="ordered locus">BAV1352</name>
</gene>
<dbReference type="EC" id="2.5.1.19" evidence="1"/>
<dbReference type="EMBL" id="AM167904">
    <property type="protein sequence ID" value="CAJ48961.1"/>
    <property type="molecule type" value="Genomic_DNA"/>
</dbReference>
<dbReference type="RefSeq" id="WP_012417033.1">
    <property type="nucleotide sequence ID" value="NC_010645.1"/>
</dbReference>
<dbReference type="SMR" id="Q2L2S7"/>
<dbReference type="STRING" id="360910.BAV1352"/>
<dbReference type="KEGG" id="bav:BAV1352"/>
<dbReference type="eggNOG" id="COG0128">
    <property type="taxonomic scope" value="Bacteria"/>
</dbReference>
<dbReference type="HOGENOM" id="CLU_024321_0_0_4"/>
<dbReference type="OrthoDB" id="9809920at2"/>
<dbReference type="UniPathway" id="UPA00053">
    <property type="reaction ID" value="UER00089"/>
</dbReference>
<dbReference type="Proteomes" id="UP000001977">
    <property type="component" value="Chromosome"/>
</dbReference>
<dbReference type="GO" id="GO:0005737">
    <property type="term" value="C:cytoplasm"/>
    <property type="evidence" value="ECO:0007669"/>
    <property type="project" value="UniProtKB-SubCell"/>
</dbReference>
<dbReference type="GO" id="GO:0003866">
    <property type="term" value="F:3-phosphoshikimate 1-carboxyvinyltransferase activity"/>
    <property type="evidence" value="ECO:0007669"/>
    <property type="project" value="UniProtKB-UniRule"/>
</dbReference>
<dbReference type="GO" id="GO:0008652">
    <property type="term" value="P:amino acid biosynthetic process"/>
    <property type="evidence" value="ECO:0007669"/>
    <property type="project" value="UniProtKB-KW"/>
</dbReference>
<dbReference type="GO" id="GO:0009073">
    <property type="term" value="P:aromatic amino acid family biosynthetic process"/>
    <property type="evidence" value="ECO:0007669"/>
    <property type="project" value="UniProtKB-KW"/>
</dbReference>
<dbReference type="GO" id="GO:0009423">
    <property type="term" value="P:chorismate biosynthetic process"/>
    <property type="evidence" value="ECO:0007669"/>
    <property type="project" value="UniProtKB-UniRule"/>
</dbReference>
<dbReference type="CDD" id="cd01556">
    <property type="entry name" value="EPSP_synthase"/>
    <property type="match status" value="1"/>
</dbReference>
<dbReference type="Gene3D" id="3.65.10.10">
    <property type="entry name" value="Enolpyruvate transferase domain"/>
    <property type="match status" value="2"/>
</dbReference>
<dbReference type="HAMAP" id="MF_00210">
    <property type="entry name" value="EPSP_synth"/>
    <property type="match status" value="1"/>
</dbReference>
<dbReference type="InterPro" id="IPR001986">
    <property type="entry name" value="Enolpyruvate_Tfrase_dom"/>
</dbReference>
<dbReference type="InterPro" id="IPR036968">
    <property type="entry name" value="Enolpyruvate_Tfrase_sf"/>
</dbReference>
<dbReference type="InterPro" id="IPR006264">
    <property type="entry name" value="EPSP_synthase"/>
</dbReference>
<dbReference type="InterPro" id="IPR023193">
    <property type="entry name" value="EPSP_synthase_CS"/>
</dbReference>
<dbReference type="InterPro" id="IPR013792">
    <property type="entry name" value="RNA3'P_cycl/enolpyr_Trfase_a/b"/>
</dbReference>
<dbReference type="NCBIfam" id="TIGR01356">
    <property type="entry name" value="aroA"/>
    <property type="match status" value="1"/>
</dbReference>
<dbReference type="PANTHER" id="PTHR21090">
    <property type="entry name" value="AROM/DEHYDROQUINATE SYNTHASE"/>
    <property type="match status" value="1"/>
</dbReference>
<dbReference type="PANTHER" id="PTHR21090:SF5">
    <property type="entry name" value="PENTAFUNCTIONAL AROM POLYPEPTIDE"/>
    <property type="match status" value="1"/>
</dbReference>
<dbReference type="Pfam" id="PF00275">
    <property type="entry name" value="EPSP_synthase"/>
    <property type="match status" value="1"/>
</dbReference>
<dbReference type="PIRSF" id="PIRSF000505">
    <property type="entry name" value="EPSPS"/>
    <property type="match status" value="1"/>
</dbReference>
<dbReference type="SUPFAM" id="SSF55205">
    <property type="entry name" value="EPT/RTPC-like"/>
    <property type="match status" value="1"/>
</dbReference>
<dbReference type="PROSITE" id="PS00104">
    <property type="entry name" value="EPSP_SYNTHASE_1"/>
    <property type="match status" value="1"/>
</dbReference>
<dbReference type="PROSITE" id="PS00885">
    <property type="entry name" value="EPSP_SYNTHASE_2"/>
    <property type="match status" value="1"/>
</dbReference>
<accession>Q2L2S7</accession>